<reference key="1">
    <citation type="journal article" date="2007" name="PLoS Genet.">
        <title>Patterns and implications of gene gain and loss in the evolution of Prochlorococcus.</title>
        <authorList>
            <person name="Kettler G.C."/>
            <person name="Martiny A.C."/>
            <person name="Huang K."/>
            <person name="Zucker J."/>
            <person name="Coleman M.L."/>
            <person name="Rodrigue S."/>
            <person name="Chen F."/>
            <person name="Lapidus A."/>
            <person name="Ferriera S."/>
            <person name="Johnson J."/>
            <person name="Steglich C."/>
            <person name="Church G.M."/>
            <person name="Richardson P."/>
            <person name="Chisholm S.W."/>
        </authorList>
    </citation>
    <scope>NUCLEOTIDE SEQUENCE [LARGE SCALE GENOMIC DNA]</scope>
    <source>
        <strain>MIT 9303</strain>
    </source>
</reference>
<protein>
    <recommendedName>
        <fullName evidence="1">Cytochrome b559 subunit alpha</fullName>
    </recommendedName>
    <alternativeName>
        <fullName evidence="1">PSII reaction center subunit V</fullName>
    </alternativeName>
</protein>
<evidence type="ECO:0000255" key="1">
    <source>
        <dbReference type="HAMAP-Rule" id="MF_00642"/>
    </source>
</evidence>
<evidence type="ECO:0000305" key="2"/>
<name>PSBE_PROM3</name>
<keyword id="KW-0249">Electron transport</keyword>
<keyword id="KW-0349">Heme</keyword>
<keyword id="KW-0408">Iron</keyword>
<keyword id="KW-0472">Membrane</keyword>
<keyword id="KW-0479">Metal-binding</keyword>
<keyword id="KW-0602">Photosynthesis</keyword>
<keyword id="KW-0604">Photosystem II</keyword>
<keyword id="KW-0793">Thylakoid</keyword>
<keyword id="KW-0812">Transmembrane</keyword>
<keyword id="KW-1133">Transmembrane helix</keyword>
<keyword id="KW-0813">Transport</keyword>
<gene>
    <name evidence="1" type="primary">psbE</name>
    <name type="ordered locus">P9303_25291</name>
</gene>
<proteinExistence type="inferred from homology"/>
<feature type="chain" id="PRO_1000056929" description="Cytochrome b559 subunit alpha">
    <location>
        <begin position="1"/>
        <end position="82"/>
    </location>
</feature>
<feature type="transmembrane region" description="Helical" evidence="1">
    <location>
        <begin position="22"/>
        <end position="36"/>
    </location>
</feature>
<feature type="binding site" description="axial binding residue" evidence="1">
    <location>
        <position position="24"/>
    </location>
    <ligand>
        <name>heme</name>
        <dbReference type="ChEBI" id="CHEBI:30413"/>
        <note>ligand shared with beta subunit</note>
    </ligand>
    <ligandPart>
        <name>Fe</name>
        <dbReference type="ChEBI" id="CHEBI:18248"/>
    </ligandPart>
</feature>
<sequence length="82" mass="9136">MAAGSTGERPFFEIVTSIRYWVIHAVTLPSIFLAGYLFVSTGLAYDTFGTPRPDAYFQASESKAPVVSQRYEAKSQLDLRLQ</sequence>
<dbReference type="EMBL" id="CP000554">
    <property type="protein sequence ID" value="ABM79260.1"/>
    <property type="molecule type" value="Genomic_DNA"/>
</dbReference>
<dbReference type="RefSeq" id="WP_011131262.1">
    <property type="nucleotide sequence ID" value="NC_008820.1"/>
</dbReference>
<dbReference type="SMR" id="A2CCQ0"/>
<dbReference type="STRING" id="59922.P9303_25291"/>
<dbReference type="KEGG" id="pmf:P9303_25291"/>
<dbReference type="HOGENOM" id="CLU_194095_0_0_3"/>
<dbReference type="BioCyc" id="PMAR59922:G1G80-2220-MONOMER"/>
<dbReference type="Proteomes" id="UP000002274">
    <property type="component" value="Chromosome"/>
</dbReference>
<dbReference type="GO" id="GO:0009523">
    <property type="term" value="C:photosystem II"/>
    <property type="evidence" value="ECO:0007669"/>
    <property type="project" value="UniProtKB-KW"/>
</dbReference>
<dbReference type="GO" id="GO:0031676">
    <property type="term" value="C:plasma membrane-derived thylakoid membrane"/>
    <property type="evidence" value="ECO:0007669"/>
    <property type="project" value="UniProtKB-SubCell"/>
</dbReference>
<dbReference type="GO" id="GO:0009055">
    <property type="term" value="F:electron transfer activity"/>
    <property type="evidence" value="ECO:0007669"/>
    <property type="project" value="UniProtKB-UniRule"/>
</dbReference>
<dbReference type="GO" id="GO:0020037">
    <property type="term" value="F:heme binding"/>
    <property type="evidence" value="ECO:0007669"/>
    <property type="project" value="InterPro"/>
</dbReference>
<dbReference type="GO" id="GO:0005506">
    <property type="term" value="F:iron ion binding"/>
    <property type="evidence" value="ECO:0007669"/>
    <property type="project" value="UniProtKB-UniRule"/>
</dbReference>
<dbReference type="GO" id="GO:0009767">
    <property type="term" value="P:photosynthetic electron transport chain"/>
    <property type="evidence" value="ECO:0007669"/>
    <property type="project" value="InterPro"/>
</dbReference>
<dbReference type="Gene3D" id="1.20.5.860">
    <property type="entry name" value="Photosystem II cytochrome b559, alpha subunit"/>
    <property type="match status" value="1"/>
</dbReference>
<dbReference type="HAMAP" id="MF_00642">
    <property type="entry name" value="PSII_PsbE"/>
    <property type="match status" value="1"/>
</dbReference>
<dbReference type="InterPro" id="IPR006217">
    <property type="entry name" value="PSII_cyt_b559_asu"/>
</dbReference>
<dbReference type="InterPro" id="IPR037025">
    <property type="entry name" value="PSII_cyt_b559_asu_sf"/>
</dbReference>
<dbReference type="InterPro" id="IPR013081">
    <property type="entry name" value="PSII_cyt_b559_N"/>
</dbReference>
<dbReference type="InterPro" id="IPR013082">
    <property type="entry name" value="PSII_cytb559_asu_lum"/>
</dbReference>
<dbReference type="NCBIfam" id="TIGR01332">
    <property type="entry name" value="cyt_b559_alpha"/>
    <property type="match status" value="1"/>
</dbReference>
<dbReference type="PANTHER" id="PTHR33391">
    <property type="entry name" value="CYTOCHROME B559 SUBUNIT BETA-RELATED"/>
    <property type="match status" value="1"/>
</dbReference>
<dbReference type="PANTHER" id="PTHR33391:SF9">
    <property type="entry name" value="CYTOCHROME B559 SUBUNIT BETA-RELATED"/>
    <property type="match status" value="1"/>
</dbReference>
<dbReference type="Pfam" id="PF00283">
    <property type="entry name" value="Cytochrom_B559"/>
    <property type="match status" value="1"/>
</dbReference>
<dbReference type="Pfam" id="PF00284">
    <property type="entry name" value="Cytochrom_B559a"/>
    <property type="match status" value="1"/>
</dbReference>
<dbReference type="PIRSF" id="PIRSF000036">
    <property type="entry name" value="PsbE"/>
    <property type="match status" value="1"/>
</dbReference>
<dbReference type="SUPFAM" id="SSF161045">
    <property type="entry name" value="Cytochrome b559 subunits"/>
    <property type="match status" value="1"/>
</dbReference>
<organism>
    <name type="scientific">Prochlorococcus marinus (strain MIT 9303)</name>
    <dbReference type="NCBI Taxonomy" id="59922"/>
    <lineage>
        <taxon>Bacteria</taxon>
        <taxon>Bacillati</taxon>
        <taxon>Cyanobacteriota</taxon>
        <taxon>Cyanophyceae</taxon>
        <taxon>Synechococcales</taxon>
        <taxon>Prochlorococcaceae</taxon>
        <taxon>Prochlorococcus</taxon>
    </lineage>
</organism>
<comment type="function">
    <text evidence="1">This b-type cytochrome is tightly associated with the reaction center of photosystem II (PSII). PSII is a light-driven water:plastoquinone oxidoreductase that uses light energy to abstract electrons from H(2)O, generating O(2) and a proton gradient subsequently used for ATP formation. It consists of a core antenna complex that captures photons, and an electron transfer chain that converts photonic excitation into a charge separation.</text>
</comment>
<comment type="cofactor">
    <cofactor evidence="1">
        <name>heme b</name>
        <dbReference type="ChEBI" id="CHEBI:60344"/>
    </cofactor>
    <text evidence="1">With its partner (PsbF) binds heme. PSII binds additional chlorophylls, carotenoids and specific lipids.</text>
</comment>
<comment type="subunit">
    <text evidence="2">Heterodimer of an alpha subunit and a beta subunit. PSII is composed of 1 copy each of membrane proteins PsbA, PsbB, PsbC, PsbD, PsbE, PsbF, PsbH, PsbI, PsbJ, PsbK, PsbL, PsbM, PsbT, PsbX, PsbY, Psb30/Ycf12, peripheral proteins PsbO, CyanoQ (PsbQ), PsbU, PsbV and a large number of cofactors. It forms dimeric complexes.</text>
</comment>
<comment type="subcellular location">
    <subcellularLocation>
        <location evidence="1">Cellular thylakoid membrane</location>
        <topology evidence="1">Single-pass membrane protein</topology>
    </subcellularLocation>
</comment>
<comment type="similarity">
    <text evidence="1">Belongs to the PsbE/PsbF family.</text>
</comment>
<accession>A2CCQ0</accession>